<keyword id="KW-0963">Cytoplasm</keyword>
<keyword id="KW-0227">DNA damage</keyword>
<keyword id="KW-0234">DNA repair</keyword>
<keyword id="KW-0378">Hydrolase</keyword>
<organism>
    <name type="scientific">Staphylococcus aureus (strain JH9)</name>
    <dbReference type="NCBI Taxonomy" id="359786"/>
    <lineage>
        <taxon>Bacteria</taxon>
        <taxon>Bacillati</taxon>
        <taxon>Bacillota</taxon>
        <taxon>Bacilli</taxon>
        <taxon>Bacillales</taxon>
        <taxon>Staphylococcaceae</taxon>
        <taxon>Staphylococcus</taxon>
    </lineage>
</organism>
<accession>A5IQD5</accession>
<comment type="function">
    <text evidence="1">Excises uracil residues from the DNA which can arise as a result of misincorporation of dUMP residues by DNA polymerase or due to deamination of cytosine.</text>
</comment>
<comment type="catalytic activity">
    <reaction evidence="1">
        <text>Hydrolyzes single-stranded DNA or mismatched double-stranded DNA and polynucleotides, releasing free uracil.</text>
        <dbReference type="EC" id="3.2.2.27"/>
    </reaction>
</comment>
<comment type="subcellular location">
    <subcellularLocation>
        <location evidence="1">Cytoplasm</location>
    </subcellularLocation>
</comment>
<comment type="similarity">
    <text evidence="1">Belongs to the uracil-DNA glycosylase (UDG) superfamily. UNG family.</text>
</comment>
<evidence type="ECO:0000255" key="1">
    <source>
        <dbReference type="HAMAP-Rule" id="MF_00148"/>
    </source>
</evidence>
<proteinExistence type="inferred from homology"/>
<sequence>MEWSQIFHDITTKHDFKAMHDFLEKEYSTAIVYPDRENIYQAFDLTPFENIKVVILGQDPYHGPNQAHGLAFSVQPNAKFPPSLRNMYKELADDIGCVRQTPHLQDWAREGVLLLNTVLTVRQGEANSHRDIGWETFTDEIIKAVSDYKEHVVFILWGKPAQQKIKLIDTSKHCIIKSVHPSPLSAYRGFFGSKPYSKANAYLESVGKSPINWCESEA</sequence>
<name>UNG_STAA9</name>
<protein>
    <recommendedName>
        <fullName evidence="1">Uracil-DNA glycosylase</fullName>
        <shortName evidence="1">UDG</shortName>
        <ecNumber evidence="1">3.2.2.27</ecNumber>
    </recommendedName>
</protein>
<gene>
    <name evidence="1" type="primary">ung</name>
    <name type="ordered locus">SaurJH9_0604</name>
</gene>
<feature type="chain" id="PRO_1000076681" description="Uracil-DNA glycosylase">
    <location>
        <begin position="1"/>
        <end position="218"/>
    </location>
</feature>
<feature type="active site" description="Proton acceptor" evidence="1">
    <location>
        <position position="59"/>
    </location>
</feature>
<dbReference type="EC" id="3.2.2.27" evidence="1"/>
<dbReference type="EMBL" id="CP000703">
    <property type="protein sequence ID" value="ABQ48408.1"/>
    <property type="molecule type" value="Genomic_DNA"/>
</dbReference>
<dbReference type="RefSeq" id="WP_000455256.1">
    <property type="nucleotide sequence ID" value="NC_009487.1"/>
</dbReference>
<dbReference type="SMR" id="A5IQD5"/>
<dbReference type="KEGG" id="saj:SaurJH9_0604"/>
<dbReference type="HOGENOM" id="CLU_032162_3_1_9"/>
<dbReference type="GO" id="GO:0005737">
    <property type="term" value="C:cytoplasm"/>
    <property type="evidence" value="ECO:0007669"/>
    <property type="project" value="UniProtKB-SubCell"/>
</dbReference>
<dbReference type="GO" id="GO:0004844">
    <property type="term" value="F:uracil DNA N-glycosylase activity"/>
    <property type="evidence" value="ECO:0007669"/>
    <property type="project" value="UniProtKB-UniRule"/>
</dbReference>
<dbReference type="GO" id="GO:0097510">
    <property type="term" value="P:base-excision repair, AP site formation via deaminated base removal"/>
    <property type="evidence" value="ECO:0007669"/>
    <property type="project" value="TreeGrafter"/>
</dbReference>
<dbReference type="CDD" id="cd10027">
    <property type="entry name" value="UDG-F1-like"/>
    <property type="match status" value="1"/>
</dbReference>
<dbReference type="FunFam" id="3.40.470.10:FF:000001">
    <property type="entry name" value="Uracil-DNA glycosylase"/>
    <property type="match status" value="1"/>
</dbReference>
<dbReference type="Gene3D" id="3.40.470.10">
    <property type="entry name" value="Uracil-DNA glycosylase-like domain"/>
    <property type="match status" value="1"/>
</dbReference>
<dbReference type="HAMAP" id="MF_00148">
    <property type="entry name" value="UDG"/>
    <property type="match status" value="1"/>
</dbReference>
<dbReference type="InterPro" id="IPR002043">
    <property type="entry name" value="UDG_fam1"/>
</dbReference>
<dbReference type="InterPro" id="IPR018085">
    <property type="entry name" value="Ura-DNA_Glyclase_AS"/>
</dbReference>
<dbReference type="InterPro" id="IPR005122">
    <property type="entry name" value="Uracil-DNA_glycosylase-like"/>
</dbReference>
<dbReference type="InterPro" id="IPR036895">
    <property type="entry name" value="Uracil-DNA_glycosylase-like_sf"/>
</dbReference>
<dbReference type="NCBIfam" id="NF003588">
    <property type="entry name" value="PRK05254.1-1"/>
    <property type="match status" value="1"/>
</dbReference>
<dbReference type="NCBIfam" id="NF003589">
    <property type="entry name" value="PRK05254.1-2"/>
    <property type="match status" value="1"/>
</dbReference>
<dbReference type="NCBIfam" id="NF003591">
    <property type="entry name" value="PRK05254.1-4"/>
    <property type="match status" value="1"/>
</dbReference>
<dbReference type="NCBIfam" id="NF003592">
    <property type="entry name" value="PRK05254.1-5"/>
    <property type="match status" value="1"/>
</dbReference>
<dbReference type="NCBIfam" id="TIGR00628">
    <property type="entry name" value="ung"/>
    <property type="match status" value="1"/>
</dbReference>
<dbReference type="PANTHER" id="PTHR11264">
    <property type="entry name" value="URACIL-DNA GLYCOSYLASE"/>
    <property type="match status" value="1"/>
</dbReference>
<dbReference type="PANTHER" id="PTHR11264:SF0">
    <property type="entry name" value="URACIL-DNA GLYCOSYLASE"/>
    <property type="match status" value="1"/>
</dbReference>
<dbReference type="Pfam" id="PF03167">
    <property type="entry name" value="UDG"/>
    <property type="match status" value="1"/>
</dbReference>
<dbReference type="SMART" id="SM00986">
    <property type="entry name" value="UDG"/>
    <property type="match status" value="1"/>
</dbReference>
<dbReference type="SMART" id="SM00987">
    <property type="entry name" value="UreE_C"/>
    <property type="match status" value="1"/>
</dbReference>
<dbReference type="SUPFAM" id="SSF52141">
    <property type="entry name" value="Uracil-DNA glycosylase-like"/>
    <property type="match status" value="1"/>
</dbReference>
<dbReference type="PROSITE" id="PS00130">
    <property type="entry name" value="U_DNA_GLYCOSYLASE"/>
    <property type="match status" value="1"/>
</dbReference>
<reference key="1">
    <citation type="submission" date="2007-05" db="EMBL/GenBank/DDBJ databases">
        <title>Complete sequence of chromosome of Staphylococcus aureus subsp. aureus JH9.</title>
        <authorList>
            <consortium name="US DOE Joint Genome Institute"/>
            <person name="Copeland A."/>
            <person name="Lucas S."/>
            <person name="Lapidus A."/>
            <person name="Barry K."/>
            <person name="Detter J.C."/>
            <person name="Glavina del Rio T."/>
            <person name="Hammon N."/>
            <person name="Israni S."/>
            <person name="Pitluck S."/>
            <person name="Chain P."/>
            <person name="Malfatti S."/>
            <person name="Shin M."/>
            <person name="Vergez L."/>
            <person name="Schmutz J."/>
            <person name="Larimer F."/>
            <person name="Land M."/>
            <person name="Hauser L."/>
            <person name="Kyrpides N."/>
            <person name="Kim E."/>
            <person name="Tomasz A."/>
            <person name="Richardson P."/>
        </authorList>
    </citation>
    <scope>NUCLEOTIDE SEQUENCE [LARGE SCALE GENOMIC DNA]</scope>
    <source>
        <strain>JH9</strain>
    </source>
</reference>